<name>DCUP_GEOMG</name>
<evidence type="ECO:0000255" key="1">
    <source>
        <dbReference type="HAMAP-Rule" id="MF_00218"/>
    </source>
</evidence>
<feature type="chain" id="PRO_0000325648" description="Uroporphyrinogen decarboxylase">
    <location>
        <begin position="1"/>
        <end position="340"/>
    </location>
</feature>
<feature type="binding site" evidence="1">
    <location>
        <begin position="23"/>
        <end position="27"/>
    </location>
    <ligand>
        <name>substrate</name>
    </ligand>
</feature>
<feature type="binding site" evidence="1">
    <location>
        <position position="72"/>
    </location>
    <ligand>
        <name>substrate</name>
    </ligand>
</feature>
<feature type="binding site" evidence="1">
    <location>
        <position position="147"/>
    </location>
    <ligand>
        <name>substrate</name>
    </ligand>
</feature>
<feature type="binding site" evidence="1">
    <location>
        <position position="202"/>
    </location>
    <ligand>
        <name>substrate</name>
    </ligand>
</feature>
<feature type="binding site" evidence="1">
    <location>
        <position position="316"/>
    </location>
    <ligand>
        <name>substrate</name>
    </ligand>
</feature>
<feature type="site" description="Transition state stabilizer" evidence="1">
    <location>
        <position position="72"/>
    </location>
</feature>
<comment type="function">
    <text evidence="1">Catalyzes the decarboxylation of four acetate groups of uroporphyrinogen-III to yield coproporphyrinogen-III.</text>
</comment>
<comment type="catalytic activity">
    <reaction evidence="1">
        <text>uroporphyrinogen III + 4 H(+) = coproporphyrinogen III + 4 CO2</text>
        <dbReference type="Rhea" id="RHEA:19865"/>
        <dbReference type="ChEBI" id="CHEBI:15378"/>
        <dbReference type="ChEBI" id="CHEBI:16526"/>
        <dbReference type="ChEBI" id="CHEBI:57308"/>
        <dbReference type="ChEBI" id="CHEBI:57309"/>
        <dbReference type="EC" id="4.1.1.37"/>
    </reaction>
</comment>
<comment type="pathway">
    <text evidence="1">Porphyrin-containing compound metabolism; protoporphyrin-IX biosynthesis; coproporphyrinogen-III from 5-aminolevulinate: step 4/4.</text>
</comment>
<comment type="subunit">
    <text evidence="1">Homodimer.</text>
</comment>
<comment type="subcellular location">
    <subcellularLocation>
        <location evidence="1">Cytoplasm</location>
    </subcellularLocation>
</comment>
<comment type="similarity">
    <text evidence="1">Belongs to the uroporphyrinogen decarboxylase family.</text>
</comment>
<protein>
    <recommendedName>
        <fullName evidence="1">Uroporphyrinogen decarboxylase</fullName>
        <shortName evidence="1">UPD</shortName>
        <shortName evidence="1">URO-D</shortName>
        <ecNumber evidence="1">4.1.1.37</ecNumber>
    </recommendedName>
</protein>
<organism>
    <name type="scientific">Geobacter metallireducens (strain ATCC 53774 / DSM 7210 / GS-15)</name>
    <dbReference type="NCBI Taxonomy" id="269799"/>
    <lineage>
        <taxon>Bacteria</taxon>
        <taxon>Pseudomonadati</taxon>
        <taxon>Thermodesulfobacteriota</taxon>
        <taxon>Desulfuromonadia</taxon>
        <taxon>Geobacterales</taxon>
        <taxon>Geobacteraceae</taxon>
        <taxon>Geobacter</taxon>
    </lineage>
</organism>
<sequence length="340" mass="37773">MNNRFLDACWGKPVDRTPVWLMRQAGRYLPEYMAVRSKCTFLELCKTPELAAEVTLQPVDILGVDAAILFSDILTPVEPMGLKLDFVPGPVFETPVRTMADVERLRIPNPEEDVPYVLDTIKILRKELAGRVPLIGFGGAPFTLACYMVEGKGSKDWATIKRMMYAAPEVYAALMDKVTMMDMEYLNAQIRAGAQAIQIFDTWGGVLSPTDYEKFVLPYTRKLINGLNRQNTPVIHFVKGAGTMLETVQKAGGDVMGLDWHVNLGKARDVLGPNMAVQGNLDPTVLYAPKEVIEVEVKRVLDENAGRPGHIFNLGHGILPTVPPENAIHMVECVHRLSQK</sequence>
<keyword id="KW-0963">Cytoplasm</keyword>
<keyword id="KW-0210">Decarboxylase</keyword>
<keyword id="KW-0456">Lyase</keyword>
<keyword id="KW-0627">Porphyrin biosynthesis</keyword>
<keyword id="KW-1185">Reference proteome</keyword>
<gene>
    <name evidence="1" type="primary">hemE</name>
    <name type="ordered locus">Gmet_0016</name>
</gene>
<accession>Q39ZQ8</accession>
<reference key="1">
    <citation type="journal article" date="2009" name="BMC Microbiol.">
        <title>The genome sequence of Geobacter metallireducens: features of metabolism, physiology and regulation common and dissimilar to Geobacter sulfurreducens.</title>
        <authorList>
            <person name="Aklujkar M."/>
            <person name="Krushkal J."/>
            <person name="DiBartolo G."/>
            <person name="Lapidus A."/>
            <person name="Land M.L."/>
            <person name="Lovley D.R."/>
        </authorList>
    </citation>
    <scope>NUCLEOTIDE SEQUENCE [LARGE SCALE GENOMIC DNA]</scope>
    <source>
        <strain>ATCC 53774 / DSM 7210 / GS-15</strain>
    </source>
</reference>
<proteinExistence type="inferred from homology"/>
<dbReference type="EC" id="4.1.1.37" evidence="1"/>
<dbReference type="EMBL" id="CP000148">
    <property type="protein sequence ID" value="ABB30266.1"/>
    <property type="molecule type" value="Genomic_DNA"/>
</dbReference>
<dbReference type="RefSeq" id="WP_004513781.1">
    <property type="nucleotide sequence ID" value="NC_007517.1"/>
</dbReference>
<dbReference type="SMR" id="Q39ZQ8"/>
<dbReference type="STRING" id="269799.Gmet_0016"/>
<dbReference type="KEGG" id="gme:Gmet_0016"/>
<dbReference type="eggNOG" id="COG0407">
    <property type="taxonomic scope" value="Bacteria"/>
</dbReference>
<dbReference type="HOGENOM" id="CLU_040933_0_0_7"/>
<dbReference type="UniPathway" id="UPA00251">
    <property type="reaction ID" value="UER00321"/>
</dbReference>
<dbReference type="Proteomes" id="UP000007073">
    <property type="component" value="Chromosome"/>
</dbReference>
<dbReference type="GO" id="GO:0005829">
    <property type="term" value="C:cytosol"/>
    <property type="evidence" value="ECO:0007669"/>
    <property type="project" value="TreeGrafter"/>
</dbReference>
<dbReference type="GO" id="GO:0004853">
    <property type="term" value="F:uroporphyrinogen decarboxylase activity"/>
    <property type="evidence" value="ECO:0007669"/>
    <property type="project" value="UniProtKB-UniRule"/>
</dbReference>
<dbReference type="GO" id="GO:0019353">
    <property type="term" value="P:protoporphyrinogen IX biosynthetic process from glutamate"/>
    <property type="evidence" value="ECO:0007669"/>
    <property type="project" value="TreeGrafter"/>
</dbReference>
<dbReference type="CDD" id="cd00717">
    <property type="entry name" value="URO-D"/>
    <property type="match status" value="1"/>
</dbReference>
<dbReference type="FunFam" id="3.20.20.210:FF:000015">
    <property type="entry name" value="Uroporphyrinogen decarboxylase"/>
    <property type="match status" value="1"/>
</dbReference>
<dbReference type="Gene3D" id="3.20.20.210">
    <property type="match status" value="1"/>
</dbReference>
<dbReference type="HAMAP" id="MF_00218">
    <property type="entry name" value="URO_D"/>
    <property type="match status" value="1"/>
</dbReference>
<dbReference type="InterPro" id="IPR038071">
    <property type="entry name" value="UROD/MetE-like_sf"/>
</dbReference>
<dbReference type="InterPro" id="IPR006361">
    <property type="entry name" value="Uroporphyrinogen_deCO2ase_HemE"/>
</dbReference>
<dbReference type="InterPro" id="IPR000257">
    <property type="entry name" value="Uroporphyrinogen_deCOase"/>
</dbReference>
<dbReference type="NCBIfam" id="TIGR01464">
    <property type="entry name" value="hemE"/>
    <property type="match status" value="1"/>
</dbReference>
<dbReference type="PANTHER" id="PTHR21091">
    <property type="entry name" value="METHYLTETRAHYDROFOLATE:HOMOCYSTEINE METHYLTRANSFERASE RELATED"/>
    <property type="match status" value="1"/>
</dbReference>
<dbReference type="PANTHER" id="PTHR21091:SF169">
    <property type="entry name" value="UROPORPHYRINOGEN DECARBOXYLASE"/>
    <property type="match status" value="1"/>
</dbReference>
<dbReference type="Pfam" id="PF01208">
    <property type="entry name" value="URO-D"/>
    <property type="match status" value="1"/>
</dbReference>
<dbReference type="SUPFAM" id="SSF51726">
    <property type="entry name" value="UROD/MetE-like"/>
    <property type="match status" value="1"/>
</dbReference>
<dbReference type="PROSITE" id="PS00906">
    <property type="entry name" value="UROD_1"/>
    <property type="match status" value="1"/>
</dbReference>
<dbReference type="PROSITE" id="PS00907">
    <property type="entry name" value="UROD_2"/>
    <property type="match status" value="1"/>
</dbReference>